<keyword id="KW-1015">Disulfide bond</keyword>
<keyword id="KW-0325">Glycoprotein</keyword>
<keyword id="KW-0964">Secreted</keyword>
<keyword id="KW-0732">Signal</keyword>
<keyword id="KW-0843">Virulence</keyword>
<accession>B1AC89</accession>
<sequence>MKSITTASFALILFGVGAASADHASRVLVLGGGAVPSGTKTYTTGIRATIDGDSFCGGSLISPTHVLTTTACIGYTKPANWVSVGTHYLNGTHDGEQIKVVSAQNHTGFNSTSGSYDVALLRLERPSKFMPVKLPAADDSDVIPGMRSSLVGWGYTSYPNGTKAYELQGVGLEVWSNTDCARIYSLDDTMVCAGGGVGKDSCNGDTGGPLIKERGPGDEDDIVVGLVSLGSRMWCGVPRSVFACVESLGMDQLGH</sequence>
<name>GIP4_PHYIN</name>
<protein>
    <recommendedName>
        <fullName evidence="5">Glucanase inhibitor protein 4</fullName>
    </recommendedName>
</protein>
<evidence type="ECO:0000255" key="1"/>
<evidence type="ECO:0000255" key="2">
    <source>
        <dbReference type="PROSITE-ProRule" id="PRU00274"/>
    </source>
</evidence>
<evidence type="ECO:0000255" key="3">
    <source>
        <dbReference type="PROSITE-ProRule" id="PRU00498"/>
    </source>
</evidence>
<evidence type="ECO:0000269" key="4">
    <source>
    </source>
</evidence>
<evidence type="ECO:0000303" key="5">
    <source>
    </source>
</evidence>
<evidence type="ECO:0000305" key="6"/>
<evidence type="ECO:0000305" key="7">
    <source>
    </source>
</evidence>
<proteinExistence type="evidence at protein level"/>
<reference key="1">
    <citation type="journal article" date="2008" name="Mol. Plant Microbe Interact.">
        <title>Structure of the glucanase inhibitor protein (GIP) family from phytophthora species suggests coevolution with plant endo-beta-1,3-glucanases.</title>
        <authorList>
            <person name="Damasceno C.M."/>
            <person name="Bishop J.G."/>
            <person name="Ripoll D.R."/>
            <person name="Win J."/>
            <person name="Kamoun S."/>
            <person name="Rose J.K."/>
        </authorList>
    </citation>
    <scope>NUCLEOTIDE SEQUENCE [GENOMIC DNA]</scope>
    <scope>FUNCTION</scope>
    <scope>SUBCELLULAR LOCATION</scope>
    <scope>INDUCTION</scope>
    <scope>INTERACTION WITH HOST ENDOGLUCANASES</scope>
    <source>
        <strain>US970001</strain>
    </source>
</reference>
<feature type="signal peptide" evidence="1">
    <location>
        <begin position="1"/>
        <end position="21"/>
    </location>
</feature>
<feature type="chain" id="PRO_5002761720" description="Glucanase inhibitor protein 4" evidence="1">
    <location>
        <begin position="22"/>
        <end position="255"/>
    </location>
</feature>
<feature type="domain" description="Peptidase S1" evidence="2">
    <location>
        <begin position="29"/>
        <end position="255"/>
    </location>
</feature>
<feature type="glycosylation site" description="N-linked (GlcNAc...) asparagine" evidence="3">
    <location>
        <position position="90"/>
    </location>
</feature>
<feature type="glycosylation site" description="N-linked (GlcNAc...) asparagine" evidence="3">
    <location>
        <position position="105"/>
    </location>
</feature>
<feature type="glycosylation site" description="N-linked (GlcNAc...) asparagine" evidence="3">
    <location>
        <position position="110"/>
    </location>
</feature>
<feature type="glycosylation site" description="N-linked (GlcNAc...) asparagine" evidence="3">
    <location>
        <position position="160"/>
    </location>
</feature>
<feature type="disulfide bond" evidence="2">
    <location>
        <begin position="56"/>
        <end position="72"/>
    </location>
</feature>
<feature type="disulfide bond" evidence="2">
    <location>
        <begin position="180"/>
        <end position="192"/>
    </location>
</feature>
<feature type="disulfide bond" evidence="2">
    <location>
        <begin position="202"/>
        <end position="235"/>
    </location>
</feature>
<dbReference type="EMBL" id="EU443394">
    <property type="protein sequence ID" value="ACA23212.1"/>
    <property type="molecule type" value="Genomic_DNA"/>
</dbReference>
<dbReference type="SMR" id="B1AC89"/>
<dbReference type="GlyCosmos" id="B1AC89">
    <property type="glycosylation" value="4 sites, No reported glycans"/>
</dbReference>
<dbReference type="VEuPathDB" id="FungiDB:PITG_13671"/>
<dbReference type="GO" id="GO:0005576">
    <property type="term" value="C:extracellular region"/>
    <property type="evidence" value="ECO:0007669"/>
    <property type="project" value="UniProtKB-SubCell"/>
</dbReference>
<dbReference type="GO" id="GO:0004252">
    <property type="term" value="F:serine-type endopeptidase activity"/>
    <property type="evidence" value="ECO:0007669"/>
    <property type="project" value="InterPro"/>
</dbReference>
<dbReference type="GO" id="GO:0006508">
    <property type="term" value="P:proteolysis"/>
    <property type="evidence" value="ECO:0007669"/>
    <property type="project" value="InterPro"/>
</dbReference>
<dbReference type="CDD" id="cd00190">
    <property type="entry name" value="Tryp_SPc"/>
    <property type="match status" value="1"/>
</dbReference>
<dbReference type="Gene3D" id="2.40.10.10">
    <property type="entry name" value="Trypsin-like serine proteases"/>
    <property type="match status" value="2"/>
</dbReference>
<dbReference type="InterPro" id="IPR050430">
    <property type="entry name" value="Peptidase_S1"/>
</dbReference>
<dbReference type="InterPro" id="IPR009003">
    <property type="entry name" value="Peptidase_S1_PA"/>
</dbReference>
<dbReference type="InterPro" id="IPR043504">
    <property type="entry name" value="Peptidase_S1_PA_chymotrypsin"/>
</dbReference>
<dbReference type="InterPro" id="IPR001314">
    <property type="entry name" value="Peptidase_S1A"/>
</dbReference>
<dbReference type="InterPro" id="IPR001254">
    <property type="entry name" value="Trypsin_dom"/>
</dbReference>
<dbReference type="PANTHER" id="PTHR24276:SF98">
    <property type="entry name" value="FI18310P1-RELATED"/>
    <property type="match status" value="1"/>
</dbReference>
<dbReference type="PANTHER" id="PTHR24276">
    <property type="entry name" value="POLYSERASE-RELATED"/>
    <property type="match status" value="1"/>
</dbReference>
<dbReference type="Pfam" id="PF00089">
    <property type="entry name" value="Trypsin"/>
    <property type="match status" value="1"/>
</dbReference>
<dbReference type="PRINTS" id="PR00722">
    <property type="entry name" value="CHYMOTRYPSIN"/>
</dbReference>
<dbReference type="SMART" id="SM00020">
    <property type="entry name" value="Tryp_SPc"/>
    <property type="match status" value="1"/>
</dbReference>
<dbReference type="SUPFAM" id="SSF50494">
    <property type="entry name" value="Trypsin-like serine proteases"/>
    <property type="match status" value="1"/>
</dbReference>
<dbReference type="PROSITE" id="PS50240">
    <property type="entry name" value="TRYPSIN_DOM"/>
    <property type="match status" value="1"/>
</dbReference>
<organism>
    <name type="scientific">Phytophthora infestans</name>
    <name type="common">Potato late blight agent</name>
    <name type="synonym">Botrytis infestans</name>
    <dbReference type="NCBI Taxonomy" id="4787"/>
    <lineage>
        <taxon>Eukaryota</taxon>
        <taxon>Sar</taxon>
        <taxon>Stramenopiles</taxon>
        <taxon>Oomycota</taxon>
        <taxon>Peronosporales</taxon>
        <taxon>Peronosporaceae</taxon>
        <taxon>Phytophthora</taxon>
    </lineage>
</organism>
<gene>
    <name evidence="5" type="primary">GIP4</name>
</gene>
<comment type="function">
    <text evidence="4">Secreted effector that suppresses host plant glucan elicitor-mediated defense responses (PubMed:18624645). Targets host endoglucanases and inhibits the endoglucanase-mediated release of elicitor-active glucan oligosaccharides from P.infestans cell walls (PubMed:18624645).</text>
</comment>
<comment type="subunit">
    <text evidence="4">Forms an apoplastic complex with host endoglucanases in tomato leaves during P.infestans infection.</text>
</comment>
<comment type="subcellular location">
    <subcellularLocation>
        <location evidence="4">Secreted</location>
    </subcellularLocation>
</comment>
<comment type="induction">
    <text evidence="4">Expressed during infection and the expression levels increase with disease progression.</text>
</comment>
<comment type="similarity">
    <text evidence="6">Belongs to the peptidase S1 family.</text>
</comment>
<comment type="caution">
    <text evidence="7">None of the predicted glucanase inhibitor proteins (GIPS) has an intact catalytic triad, therefore, GIPs are proteolytically inactive.</text>
</comment>